<gene>
    <name evidence="1" type="primary">moaC</name>
    <name type="ordered locus">lmo1046</name>
</gene>
<evidence type="ECO:0000255" key="1">
    <source>
        <dbReference type="HAMAP-Rule" id="MF_01224"/>
    </source>
</evidence>
<accession>Q8Y871</accession>
<sequence length="160" mass="17268">MEKDDLTHFNDEKRAKMVDVTSKSETKRRAIASATIHMNEETLARIHAGKIAKGDVLAVAQVAGIMAAKKTSELIPMCHPIMTTKADISFEDDGKTALTITSEVVTVGKTGVEMEALTAVTIAALTIYDMCKAMDKGMRIEKTYLVEKTGGKSGTFKAEA</sequence>
<name>MOAC_LISMO</name>
<keyword id="KW-0456">Lyase</keyword>
<keyword id="KW-0501">Molybdenum cofactor biosynthesis</keyword>
<keyword id="KW-1185">Reference proteome</keyword>
<comment type="function">
    <text evidence="1">Catalyzes the conversion of (8S)-3',8-cyclo-7,8-dihydroguanosine 5'-triphosphate to cyclic pyranopterin monophosphate (cPMP).</text>
</comment>
<comment type="catalytic activity">
    <reaction evidence="1">
        <text>(8S)-3',8-cyclo-7,8-dihydroguanosine 5'-triphosphate = cyclic pyranopterin phosphate + diphosphate</text>
        <dbReference type="Rhea" id="RHEA:49580"/>
        <dbReference type="ChEBI" id="CHEBI:33019"/>
        <dbReference type="ChEBI" id="CHEBI:59648"/>
        <dbReference type="ChEBI" id="CHEBI:131766"/>
        <dbReference type="EC" id="4.6.1.17"/>
    </reaction>
</comment>
<comment type="pathway">
    <text evidence="1">Cofactor biosynthesis; molybdopterin biosynthesis.</text>
</comment>
<comment type="subunit">
    <text evidence="1">Homohexamer; trimer of dimers.</text>
</comment>
<comment type="similarity">
    <text evidence="1">Belongs to the MoaC family.</text>
</comment>
<reference key="1">
    <citation type="journal article" date="2001" name="Science">
        <title>Comparative genomics of Listeria species.</title>
        <authorList>
            <person name="Glaser P."/>
            <person name="Frangeul L."/>
            <person name="Buchrieser C."/>
            <person name="Rusniok C."/>
            <person name="Amend A."/>
            <person name="Baquero F."/>
            <person name="Berche P."/>
            <person name="Bloecker H."/>
            <person name="Brandt P."/>
            <person name="Chakraborty T."/>
            <person name="Charbit A."/>
            <person name="Chetouani F."/>
            <person name="Couve E."/>
            <person name="de Daruvar A."/>
            <person name="Dehoux P."/>
            <person name="Domann E."/>
            <person name="Dominguez-Bernal G."/>
            <person name="Duchaud E."/>
            <person name="Durant L."/>
            <person name="Dussurget O."/>
            <person name="Entian K.-D."/>
            <person name="Fsihi H."/>
            <person name="Garcia-del Portillo F."/>
            <person name="Garrido P."/>
            <person name="Gautier L."/>
            <person name="Goebel W."/>
            <person name="Gomez-Lopez N."/>
            <person name="Hain T."/>
            <person name="Hauf J."/>
            <person name="Jackson D."/>
            <person name="Jones L.-M."/>
            <person name="Kaerst U."/>
            <person name="Kreft J."/>
            <person name="Kuhn M."/>
            <person name="Kunst F."/>
            <person name="Kurapkat G."/>
            <person name="Madueno E."/>
            <person name="Maitournam A."/>
            <person name="Mata Vicente J."/>
            <person name="Ng E."/>
            <person name="Nedjari H."/>
            <person name="Nordsiek G."/>
            <person name="Novella S."/>
            <person name="de Pablos B."/>
            <person name="Perez-Diaz J.-C."/>
            <person name="Purcell R."/>
            <person name="Remmel B."/>
            <person name="Rose M."/>
            <person name="Schlueter T."/>
            <person name="Simoes N."/>
            <person name="Tierrez A."/>
            <person name="Vazquez-Boland J.-A."/>
            <person name="Voss H."/>
            <person name="Wehland J."/>
            <person name="Cossart P."/>
        </authorList>
    </citation>
    <scope>NUCLEOTIDE SEQUENCE [LARGE SCALE GENOMIC DNA]</scope>
    <source>
        <strain>ATCC BAA-679 / EGD-e</strain>
    </source>
</reference>
<organism>
    <name type="scientific">Listeria monocytogenes serovar 1/2a (strain ATCC BAA-679 / EGD-e)</name>
    <dbReference type="NCBI Taxonomy" id="169963"/>
    <lineage>
        <taxon>Bacteria</taxon>
        <taxon>Bacillati</taxon>
        <taxon>Bacillota</taxon>
        <taxon>Bacilli</taxon>
        <taxon>Bacillales</taxon>
        <taxon>Listeriaceae</taxon>
        <taxon>Listeria</taxon>
    </lineage>
</organism>
<feature type="chain" id="PRO_0000097809" description="Cyclic pyranopterin monophosphate synthase">
    <location>
        <begin position="1"/>
        <end position="160"/>
    </location>
</feature>
<feature type="active site" evidence="1">
    <location>
        <position position="129"/>
    </location>
</feature>
<feature type="binding site" evidence="1">
    <location>
        <begin position="77"/>
        <end position="79"/>
    </location>
    <ligand>
        <name>substrate</name>
    </ligand>
</feature>
<feature type="binding site" evidence="1">
    <location>
        <begin position="114"/>
        <end position="115"/>
    </location>
    <ligand>
        <name>substrate</name>
    </ligand>
</feature>
<protein>
    <recommendedName>
        <fullName evidence="1">Cyclic pyranopterin monophosphate synthase</fullName>
        <ecNumber evidence="1">4.6.1.17</ecNumber>
    </recommendedName>
    <alternativeName>
        <fullName evidence="1">Molybdenum cofactor biosynthesis protein C</fullName>
    </alternativeName>
</protein>
<proteinExistence type="inferred from homology"/>
<dbReference type="EC" id="4.6.1.17" evidence="1"/>
<dbReference type="EMBL" id="AL591977">
    <property type="protein sequence ID" value="CAC99124.1"/>
    <property type="molecule type" value="Genomic_DNA"/>
</dbReference>
<dbReference type="PIR" id="AF1205">
    <property type="entry name" value="AF1205"/>
</dbReference>
<dbReference type="RefSeq" id="NP_464571.1">
    <property type="nucleotide sequence ID" value="NC_003210.1"/>
</dbReference>
<dbReference type="RefSeq" id="WP_003722672.1">
    <property type="nucleotide sequence ID" value="NZ_CP149495.1"/>
</dbReference>
<dbReference type="SMR" id="Q8Y871"/>
<dbReference type="STRING" id="169963.gene:17593702"/>
<dbReference type="PaxDb" id="169963-lmo1046"/>
<dbReference type="EnsemblBacteria" id="CAC99124">
    <property type="protein sequence ID" value="CAC99124"/>
    <property type="gene ID" value="CAC99124"/>
</dbReference>
<dbReference type="GeneID" id="986305"/>
<dbReference type="KEGG" id="lmo:lmo1046"/>
<dbReference type="PATRIC" id="fig|169963.11.peg.1075"/>
<dbReference type="eggNOG" id="COG0315">
    <property type="taxonomic scope" value="Bacteria"/>
</dbReference>
<dbReference type="HOGENOM" id="CLU_074693_1_1_9"/>
<dbReference type="OrthoDB" id="9794429at2"/>
<dbReference type="PhylomeDB" id="Q8Y871"/>
<dbReference type="BioCyc" id="LMON169963:LMO1046-MONOMER"/>
<dbReference type="UniPathway" id="UPA00344"/>
<dbReference type="Proteomes" id="UP000000817">
    <property type="component" value="Chromosome"/>
</dbReference>
<dbReference type="GO" id="GO:0061799">
    <property type="term" value="F:cyclic pyranopterin monophosphate synthase activity"/>
    <property type="evidence" value="ECO:0007669"/>
    <property type="project" value="UniProtKB-UniRule"/>
</dbReference>
<dbReference type="GO" id="GO:0006777">
    <property type="term" value="P:Mo-molybdopterin cofactor biosynthetic process"/>
    <property type="evidence" value="ECO:0007669"/>
    <property type="project" value="UniProtKB-UniRule"/>
</dbReference>
<dbReference type="CDD" id="cd01420">
    <property type="entry name" value="MoaC_PE"/>
    <property type="match status" value="1"/>
</dbReference>
<dbReference type="Gene3D" id="3.30.70.640">
    <property type="entry name" value="Molybdopterin cofactor biosynthesis C (MoaC) domain"/>
    <property type="match status" value="1"/>
</dbReference>
<dbReference type="HAMAP" id="MF_01224_B">
    <property type="entry name" value="MoaC_B"/>
    <property type="match status" value="1"/>
</dbReference>
<dbReference type="InterPro" id="IPR023045">
    <property type="entry name" value="MoaC"/>
</dbReference>
<dbReference type="InterPro" id="IPR047594">
    <property type="entry name" value="MoaC_bact/euk"/>
</dbReference>
<dbReference type="InterPro" id="IPR036522">
    <property type="entry name" value="MoaC_sf"/>
</dbReference>
<dbReference type="InterPro" id="IPR050105">
    <property type="entry name" value="MoCo_biosynth_MoaA/MoaC"/>
</dbReference>
<dbReference type="InterPro" id="IPR002820">
    <property type="entry name" value="Mopterin_CF_biosynth-C_dom"/>
</dbReference>
<dbReference type="NCBIfam" id="TIGR00581">
    <property type="entry name" value="moaC"/>
    <property type="match status" value="1"/>
</dbReference>
<dbReference type="NCBIfam" id="NF006870">
    <property type="entry name" value="PRK09364.1"/>
    <property type="match status" value="1"/>
</dbReference>
<dbReference type="PANTHER" id="PTHR22960:SF29">
    <property type="entry name" value="CYCLIC PYRANOPTERIN MONOPHOSPHATE SYNTHASE"/>
    <property type="match status" value="1"/>
</dbReference>
<dbReference type="PANTHER" id="PTHR22960">
    <property type="entry name" value="MOLYBDOPTERIN COFACTOR SYNTHESIS PROTEIN A"/>
    <property type="match status" value="1"/>
</dbReference>
<dbReference type="Pfam" id="PF01967">
    <property type="entry name" value="MoaC"/>
    <property type="match status" value="1"/>
</dbReference>
<dbReference type="SUPFAM" id="SSF55040">
    <property type="entry name" value="Molybdenum cofactor biosynthesis protein C, MoaC"/>
    <property type="match status" value="1"/>
</dbReference>